<dbReference type="EMBL" id="U36840">
    <property type="protein sequence ID" value="AAA79813.1"/>
    <property type="molecule type" value="Genomic_DNA"/>
</dbReference>
<dbReference type="EMBL" id="U00096">
    <property type="protein sequence ID" value="AAC75693.1"/>
    <property type="molecule type" value="Genomic_DNA"/>
</dbReference>
<dbReference type="EMBL" id="AP009048">
    <property type="protein sequence ID" value="BAA16513.1"/>
    <property type="molecule type" value="Genomic_DNA"/>
</dbReference>
<dbReference type="PIR" id="T08656">
    <property type="entry name" value="T08656"/>
</dbReference>
<dbReference type="RefSeq" id="NP_417132.1">
    <property type="nucleotide sequence ID" value="NC_000913.3"/>
</dbReference>
<dbReference type="RefSeq" id="WP_000072690.1">
    <property type="nucleotide sequence ID" value="NZ_LN832404.1"/>
</dbReference>
<dbReference type="PDB" id="2EA9">
    <property type="method" value="X-ray"/>
    <property type="resolution" value="2.10 A"/>
    <property type="chains" value="A=1-105"/>
</dbReference>
<dbReference type="PDB" id="2JN7">
    <property type="method" value="NMR"/>
    <property type="chains" value="A=1-105"/>
</dbReference>
<dbReference type="PDBsum" id="2EA9"/>
<dbReference type="PDBsum" id="2JN7"/>
<dbReference type="BMRB" id="P52141"/>
<dbReference type="SMR" id="P52141"/>
<dbReference type="BioGRID" id="4262252">
    <property type="interactions" value="16"/>
</dbReference>
<dbReference type="FunCoup" id="P52141">
    <property type="interactions" value="32"/>
</dbReference>
<dbReference type="IntAct" id="P52141">
    <property type="interactions" value="1"/>
</dbReference>
<dbReference type="STRING" id="511145.b2645"/>
<dbReference type="PaxDb" id="511145-b2645"/>
<dbReference type="EnsemblBacteria" id="AAC75693">
    <property type="protein sequence ID" value="AAC75693"/>
    <property type="gene ID" value="b2645"/>
</dbReference>
<dbReference type="GeneID" id="947123"/>
<dbReference type="KEGG" id="ecj:JW2626"/>
<dbReference type="KEGG" id="eco:b2645"/>
<dbReference type="KEGG" id="ecoc:C3026_14615"/>
<dbReference type="PATRIC" id="fig|1411691.4.peg.4093"/>
<dbReference type="EchoBASE" id="EB3004"/>
<dbReference type="eggNOG" id="ENOG50304F4">
    <property type="taxonomic scope" value="Bacteria"/>
</dbReference>
<dbReference type="HOGENOM" id="CLU_144696_1_0_6"/>
<dbReference type="InParanoid" id="P52141"/>
<dbReference type="OMA" id="HDGFTCE"/>
<dbReference type="OrthoDB" id="5588975at2"/>
<dbReference type="PhylomeDB" id="P52141"/>
<dbReference type="BioCyc" id="EcoCyc:G7380-MONOMER"/>
<dbReference type="EvolutionaryTrace" id="P52141"/>
<dbReference type="PRO" id="PR:P52141"/>
<dbReference type="Proteomes" id="UP000000625">
    <property type="component" value="Chromosome"/>
</dbReference>
<dbReference type="GO" id="GO:0051495">
    <property type="term" value="P:positive regulation of cytoskeleton organization"/>
    <property type="evidence" value="ECO:0007669"/>
    <property type="project" value="InterPro"/>
</dbReference>
<dbReference type="Gene3D" id="3.30.450.20">
    <property type="entry name" value="PAS domain"/>
    <property type="match status" value="1"/>
</dbReference>
<dbReference type="InterPro" id="IPR009320">
    <property type="entry name" value="Antitoxin_CbeA"/>
</dbReference>
<dbReference type="InterPro" id="IPR038025">
    <property type="entry name" value="CbeA_sf"/>
</dbReference>
<dbReference type="Pfam" id="PF06154">
    <property type="entry name" value="CbeA_antitoxin"/>
    <property type="match status" value="1"/>
</dbReference>
<dbReference type="SUPFAM" id="SSF143737">
    <property type="entry name" value="YeeU-like"/>
    <property type="match status" value="1"/>
</dbReference>
<name>YFJZ_ECOLI</name>
<evidence type="ECO:0000269" key="1">
    <source>
    </source>
</evidence>
<evidence type="ECO:0000303" key="2">
    <source>
    </source>
</evidence>
<evidence type="ECO:0000305" key="3"/>
<evidence type="ECO:0007829" key="4">
    <source>
        <dbReference type="PDB" id="2EA9"/>
    </source>
</evidence>
<proteinExistence type="evidence at protein level"/>
<comment type="function">
    <text evidence="1">Antitoxin component of a type IV toxin-antitoxin (TA) system. Antitoxin that counteracts the effect of cognate toxin YpjF (PubMed:28257056). Also counteracts the effect of non-cognate toxins CbtA and YfkI (PubMed:28257056).</text>
</comment>
<comment type="induction">
    <text evidence="1">Expressed in mid-log phase at considerably lower levels than antitoxin relB.</text>
</comment>
<comment type="disruption phenotype">
    <text evidence="1">Single deletion has no effect on expression of cognate toxin ypjF i.e. the probable operon is not autoregulatory (PubMed:28257056). Single deletion leads to increased biofilm formation, deletion of 3 type IV antitoxin genes (cbeA, yafW, yfjZ) has no effect on cell growth (PubMed:28257056).</text>
</comment>
<comment type="miscellaneous">
    <text evidence="3">Encoded in prophage CP4-57.</text>
</comment>
<comment type="similarity">
    <text evidence="3">Belongs to the CbeA/YafW/YfjZ antitoxin family.</text>
</comment>
<gene>
    <name type="primary">yfjZ</name>
    <name type="ordered locus">b2645</name>
    <name type="ordered locus">JW2626</name>
</gene>
<reference key="1">
    <citation type="journal article" date="1997" name="DNA Res.">
        <title>Construction of a contiguous 874-kb sequence of the Escherichia coli-K12 genome corresponding to 50.0-68.8 min on the linkage map and analysis of its sequence features.</title>
        <authorList>
            <person name="Yamamoto Y."/>
            <person name="Aiba H."/>
            <person name="Baba T."/>
            <person name="Hayashi K."/>
            <person name="Inada T."/>
            <person name="Isono K."/>
            <person name="Itoh T."/>
            <person name="Kimura S."/>
            <person name="Kitagawa M."/>
            <person name="Makino K."/>
            <person name="Miki T."/>
            <person name="Mitsuhashi N."/>
            <person name="Mizobuchi K."/>
            <person name="Mori H."/>
            <person name="Nakade S."/>
            <person name="Nakamura Y."/>
            <person name="Nashimoto H."/>
            <person name="Oshima T."/>
            <person name="Oyama S."/>
            <person name="Saito N."/>
            <person name="Sampei G."/>
            <person name="Satoh Y."/>
            <person name="Sivasundaram S."/>
            <person name="Tagami H."/>
            <person name="Takahashi H."/>
            <person name="Takeda J."/>
            <person name="Takemoto K."/>
            <person name="Uehara K."/>
            <person name="Wada C."/>
            <person name="Yamagata S."/>
            <person name="Horiuchi T."/>
        </authorList>
    </citation>
    <scope>NUCLEOTIDE SEQUENCE [LARGE SCALE GENOMIC DNA]</scope>
    <source>
        <strain>K12 / W3110 / ATCC 27325 / DSM 5911</strain>
    </source>
</reference>
<reference key="2">
    <citation type="journal article" date="1997" name="Science">
        <title>The complete genome sequence of Escherichia coli K-12.</title>
        <authorList>
            <person name="Blattner F.R."/>
            <person name="Plunkett G. III"/>
            <person name="Bloch C.A."/>
            <person name="Perna N.T."/>
            <person name="Burland V."/>
            <person name="Riley M."/>
            <person name="Collado-Vides J."/>
            <person name="Glasner J.D."/>
            <person name="Rode C.K."/>
            <person name="Mayhew G.F."/>
            <person name="Gregor J."/>
            <person name="Davis N.W."/>
            <person name="Kirkpatrick H.A."/>
            <person name="Goeden M.A."/>
            <person name="Rose D.J."/>
            <person name="Mau B."/>
            <person name="Shao Y."/>
        </authorList>
    </citation>
    <scope>NUCLEOTIDE SEQUENCE [LARGE SCALE GENOMIC DNA]</scope>
    <source>
        <strain>K12 / MG1655 / ATCC 47076</strain>
    </source>
</reference>
<reference key="3">
    <citation type="journal article" date="2006" name="Mol. Syst. Biol.">
        <title>Highly accurate genome sequences of Escherichia coli K-12 strains MG1655 and W3110.</title>
        <authorList>
            <person name="Hayashi K."/>
            <person name="Morooka N."/>
            <person name="Yamamoto Y."/>
            <person name="Fujita K."/>
            <person name="Isono K."/>
            <person name="Choi S."/>
            <person name="Ohtsubo E."/>
            <person name="Baba T."/>
            <person name="Wanner B.L."/>
            <person name="Mori H."/>
            <person name="Horiuchi T."/>
        </authorList>
    </citation>
    <scope>NUCLEOTIDE SEQUENCE [LARGE SCALE GENOMIC DNA]</scope>
    <source>
        <strain>K12 / W3110 / ATCC 27325 / DSM 5911</strain>
    </source>
</reference>
<reference key="4">
    <citation type="journal article" date="2017" name="Toxins">
        <title>Interaction of type IV toxin/antitoxin systems in cryptic prophages of Escherichia coli K-12.</title>
        <authorList>
            <person name="Wen Z."/>
            <person name="Wang P."/>
            <person name="Sun C."/>
            <person name="Guo Y."/>
            <person name="Wang X."/>
        </authorList>
    </citation>
    <scope>FUNCTION AS AN ANTITOXIN</scope>
    <scope>INDUCTION</scope>
    <scope>DISRUPTION PHENOTYPE</scope>
    <source>
        <strain>K12 / BW25113</strain>
    </source>
</reference>
<reference key="5">
    <citation type="submission" date="2007-07" db="PDB data bank">
        <title>Crystal structure of a hypothetical protein JW2626 from E. coli.</title>
        <authorList>
            <consortium name="RIKEN structural genomics initiative (RSGI)"/>
        </authorList>
    </citation>
    <scope>X-RAY CRYSTALLOGRAPHY (2.1 ANGSTROMS)</scope>
</reference>
<reference key="6">
    <citation type="submission" date="2009-02" db="PDB data bank">
        <title>NMR solution structure of E.coli hypothetical protein YfjZ.</title>
        <authorList>
            <consortium name="Northeast structural genomics consortium (NESG)"/>
        </authorList>
    </citation>
    <scope>STRUCTURE BY NMR</scope>
</reference>
<sequence>MSNTTWGLQRDITPRLGARLVQEGNQLHYLADRASITGKFSDAECPKLDVVFPHFISQIESMLTTGELNPRHAQCVTLYHNGFTCEADTLGSCGYVYIAVYPTQR</sequence>
<keyword id="KW-0002">3D-structure</keyword>
<keyword id="KW-1185">Reference proteome</keyword>
<keyword id="KW-1277">Toxin-antitoxin system</keyword>
<accession>P52141</accession>
<protein>
    <recommendedName>
        <fullName evidence="2">Antitoxin YfjZ</fullName>
    </recommendedName>
</protein>
<organism>
    <name type="scientific">Escherichia coli (strain K12)</name>
    <dbReference type="NCBI Taxonomy" id="83333"/>
    <lineage>
        <taxon>Bacteria</taxon>
        <taxon>Pseudomonadati</taxon>
        <taxon>Pseudomonadota</taxon>
        <taxon>Gammaproteobacteria</taxon>
        <taxon>Enterobacterales</taxon>
        <taxon>Enterobacteriaceae</taxon>
        <taxon>Escherichia</taxon>
    </lineage>
</organism>
<feature type="chain" id="PRO_0000169285" description="Antitoxin YfjZ">
    <location>
        <begin position="1"/>
        <end position="105"/>
    </location>
</feature>
<feature type="helix" evidence="4">
    <location>
        <begin position="5"/>
        <end position="8"/>
    </location>
</feature>
<feature type="strand" evidence="4">
    <location>
        <begin position="12"/>
        <end position="23"/>
    </location>
</feature>
<feature type="strand" evidence="4">
    <location>
        <begin position="26"/>
        <end position="28"/>
    </location>
</feature>
<feature type="helix" evidence="4">
    <location>
        <begin position="31"/>
        <end position="33"/>
    </location>
</feature>
<feature type="strand" evidence="4">
    <location>
        <begin position="34"/>
        <end position="38"/>
    </location>
</feature>
<feature type="helix" evidence="4">
    <location>
        <begin position="44"/>
        <end position="65"/>
    </location>
</feature>
<feature type="strand" evidence="4">
    <location>
        <begin position="66"/>
        <end position="68"/>
    </location>
</feature>
<feature type="strand" evidence="4">
    <location>
        <begin position="75"/>
        <end position="80"/>
    </location>
</feature>
<feature type="strand" evidence="4">
    <location>
        <begin position="83"/>
        <end position="88"/>
    </location>
</feature>
<feature type="strand" evidence="4">
    <location>
        <begin position="93"/>
        <end position="102"/>
    </location>
</feature>